<reference key="1">
    <citation type="journal article" date="1988" name="J. Biol. Chem.">
        <title>The importance of the 3'-untranslated region in the translational control of ferritin mRNA.</title>
        <authorList>
            <person name="Dickey L.F."/>
            <person name="Wang Y.H."/>
            <person name="Shull G.E."/>
            <person name="Wortman I.A. III"/>
            <person name="Theil E.C."/>
        </authorList>
    </citation>
    <scope>NUCLEOTIDE SEQUENCE [MRNA]</scope>
</reference>
<reference key="2">
    <citation type="journal article" date="1980" name="J. Biol. Chem.">
        <title>Hemoglobins of the tadpole of the bullfrog, Rana catesbeiana. Amino acid sequence of the beta chain of a major component.</title>
        <authorList>
            <person name="Watt K.W.K."/>
            <person name="Maruyama T."/>
            <person name="Riggs A.F."/>
        </authorList>
    </citation>
    <scope>PROTEIN SEQUENCE OF 2-147</scope>
</reference>
<accession>P02136</accession>
<proteinExistence type="evidence at protein level"/>
<comment type="function">
    <text>This is a tadpole (larval) beta chain.</text>
</comment>
<comment type="subunit">
    <text>Heterotetramer of two alpha chains and two beta chains.</text>
</comment>
<comment type="tissue specificity">
    <text>Red blood cells.</text>
</comment>
<comment type="similarity">
    <text evidence="1">Belongs to the globin family.</text>
</comment>
<feature type="initiator methionine" description="Removed" evidence="2">
    <location>
        <position position="1"/>
    </location>
</feature>
<feature type="chain" id="PRO_0000053087" description="Hemoglobin subunit beta-3">
    <location>
        <begin position="2"/>
        <end position="147"/>
    </location>
</feature>
<feature type="domain" description="Globin" evidence="1">
    <location>
        <begin position="3"/>
        <end position="147"/>
    </location>
</feature>
<feature type="binding site" description="distal binding residue" evidence="1">
    <location>
        <position position="64"/>
    </location>
    <ligand>
        <name>heme b</name>
        <dbReference type="ChEBI" id="CHEBI:60344"/>
    </ligand>
    <ligandPart>
        <name>Fe</name>
        <dbReference type="ChEBI" id="CHEBI:18248"/>
    </ligandPart>
</feature>
<feature type="binding site" description="proximal binding residue" evidence="1">
    <location>
        <position position="93"/>
    </location>
    <ligand>
        <name>heme b</name>
        <dbReference type="ChEBI" id="CHEBI:60344"/>
    </ligand>
    <ligandPart>
        <name>Fe</name>
        <dbReference type="ChEBI" id="CHEBI:18248"/>
    </ligandPart>
</feature>
<feature type="sequence conflict" description="In Ref. 1; AAA49526." evidence="3" ref="1">
    <original>G</original>
    <variation>T</variation>
    <location>
        <position position="57"/>
    </location>
</feature>
<feature type="sequence conflict" description="In Ref. 1; AAA49526." evidence="3" ref="1">
    <original>N</original>
    <variation>H</variation>
    <location>
        <position position="78"/>
    </location>
</feature>
<feature type="sequence conflict" description="In Ref. 1; AAA49526." evidence="3" ref="1">
    <original>D</original>
    <variation>N</variation>
    <location>
        <position position="81"/>
    </location>
</feature>
<feature type="sequence conflict" description="In Ref. 1; AAA49526." evidence="3" ref="1">
    <original>A</original>
    <variation>E</variation>
    <location>
        <position position="117"/>
    </location>
</feature>
<feature type="sequence conflict" description="In Ref. 1; AAA49526." evidence="3" ref="1">
    <original>H</original>
    <variation>Q</variation>
    <location>
        <position position="129"/>
    </location>
</feature>
<evidence type="ECO:0000255" key="1">
    <source>
        <dbReference type="PROSITE-ProRule" id="PRU00238"/>
    </source>
</evidence>
<evidence type="ECO:0000269" key="2">
    <source>
    </source>
</evidence>
<evidence type="ECO:0000305" key="3"/>
<dbReference type="EMBL" id="M19548">
    <property type="protein sequence ID" value="AAA49526.1"/>
    <property type="molecule type" value="mRNA"/>
</dbReference>
<dbReference type="PIR" id="A02456">
    <property type="entry name" value="HBFG3T"/>
</dbReference>
<dbReference type="PIR" id="I51168">
    <property type="entry name" value="I51168"/>
</dbReference>
<dbReference type="SMR" id="P02136"/>
<dbReference type="GO" id="GO:0072562">
    <property type="term" value="C:blood microparticle"/>
    <property type="evidence" value="ECO:0007669"/>
    <property type="project" value="TreeGrafter"/>
</dbReference>
<dbReference type="GO" id="GO:0031838">
    <property type="term" value="C:haptoglobin-hemoglobin complex"/>
    <property type="evidence" value="ECO:0007669"/>
    <property type="project" value="TreeGrafter"/>
</dbReference>
<dbReference type="GO" id="GO:0005833">
    <property type="term" value="C:hemoglobin complex"/>
    <property type="evidence" value="ECO:0007669"/>
    <property type="project" value="InterPro"/>
</dbReference>
<dbReference type="GO" id="GO:0031720">
    <property type="term" value="F:haptoglobin binding"/>
    <property type="evidence" value="ECO:0007669"/>
    <property type="project" value="TreeGrafter"/>
</dbReference>
<dbReference type="GO" id="GO:0020037">
    <property type="term" value="F:heme binding"/>
    <property type="evidence" value="ECO:0007669"/>
    <property type="project" value="InterPro"/>
</dbReference>
<dbReference type="GO" id="GO:0046872">
    <property type="term" value="F:metal ion binding"/>
    <property type="evidence" value="ECO:0007669"/>
    <property type="project" value="UniProtKB-KW"/>
</dbReference>
<dbReference type="GO" id="GO:0043177">
    <property type="term" value="F:organic acid binding"/>
    <property type="evidence" value="ECO:0007669"/>
    <property type="project" value="TreeGrafter"/>
</dbReference>
<dbReference type="GO" id="GO:0019825">
    <property type="term" value="F:oxygen binding"/>
    <property type="evidence" value="ECO:0007669"/>
    <property type="project" value="InterPro"/>
</dbReference>
<dbReference type="GO" id="GO:0005344">
    <property type="term" value="F:oxygen carrier activity"/>
    <property type="evidence" value="ECO:0007669"/>
    <property type="project" value="UniProtKB-KW"/>
</dbReference>
<dbReference type="GO" id="GO:0004601">
    <property type="term" value="F:peroxidase activity"/>
    <property type="evidence" value="ECO:0007669"/>
    <property type="project" value="TreeGrafter"/>
</dbReference>
<dbReference type="GO" id="GO:0042744">
    <property type="term" value="P:hydrogen peroxide catabolic process"/>
    <property type="evidence" value="ECO:0007669"/>
    <property type="project" value="TreeGrafter"/>
</dbReference>
<dbReference type="CDD" id="cd08925">
    <property type="entry name" value="Hb-beta-like"/>
    <property type="match status" value="1"/>
</dbReference>
<dbReference type="FunFam" id="1.10.490.10:FF:000001">
    <property type="entry name" value="Hemoglobin subunit beta"/>
    <property type="match status" value="1"/>
</dbReference>
<dbReference type="Gene3D" id="1.10.490.10">
    <property type="entry name" value="Globins"/>
    <property type="match status" value="1"/>
</dbReference>
<dbReference type="InterPro" id="IPR000971">
    <property type="entry name" value="Globin"/>
</dbReference>
<dbReference type="InterPro" id="IPR009050">
    <property type="entry name" value="Globin-like_sf"/>
</dbReference>
<dbReference type="InterPro" id="IPR012292">
    <property type="entry name" value="Globin/Proto"/>
</dbReference>
<dbReference type="InterPro" id="IPR002337">
    <property type="entry name" value="Hemoglobin_b"/>
</dbReference>
<dbReference type="InterPro" id="IPR050056">
    <property type="entry name" value="Hemoglobin_oxygen_transport"/>
</dbReference>
<dbReference type="PANTHER" id="PTHR11442">
    <property type="entry name" value="HEMOGLOBIN FAMILY MEMBER"/>
    <property type="match status" value="1"/>
</dbReference>
<dbReference type="PANTHER" id="PTHR11442:SF98">
    <property type="entry name" value="HEMOGLOBIN SUBUNIT BETA-2"/>
    <property type="match status" value="1"/>
</dbReference>
<dbReference type="Pfam" id="PF00042">
    <property type="entry name" value="Globin"/>
    <property type="match status" value="1"/>
</dbReference>
<dbReference type="PRINTS" id="PR00814">
    <property type="entry name" value="BETAHAEM"/>
</dbReference>
<dbReference type="SUPFAM" id="SSF46458">
    <property type="entry name" value="Globin-like"/>
    <property type="match status" value="1"/>
</dbReference>
<dbReference type="PROSITE" id="PS01033">
    <property type="entry name" value="GLOBIN"/>
    <property type="match status" value="1"/>
</dbReference>
<name>HBB3_AQUCT</name>
<protein>
    <recommendedName>
        <fullName>Hemoglobin subunit beta-3</fullName>
    </recommendedName>
    <alternativeName>
        <fullName>Beta-3-globin</fullName>
    </alternativeName>
    <alternativeName>
        <fullName>Hemoglobin beta-3 chain</fullName>
    </alternativeName>
    <alternativeName>
        <fullName>Hemoglobin beta-III chain, larval</fullName>
    </alternativeName>
</protein>
<sequence>MVHWTAEEKAVINSVWQKVDVEQDGHEALTRLFIVYPWTQRYFSTFGDLSSPAAIAGNPKVHAHGKKILGAIDNAIHNLDDVKGTLHDLSEEHANELHVDPENFRRLGEVLIVVLGAKLGKAFSPQVQHVWEKFIAVLVDALSHSYH</sequence>
<keyword id="KW-0903">Direct protein sequencing</keyword>
<keyword id="KW-0349">Heme</keyword>
<keyword id="KW-0408">Iron</keyword>
<keyword id="KW-0479">Metal-binding</keyword>
<keyword id="KW-0561">Oxygen transport</keyword>
<keyword id="KW-0813">Transport</keyword>
<organism>
    <name type="scientific">Aquarana catesbeiana</name>
    <name type="common">American bullfrog</name>
    <name type="synonym">Rana catesbeiana</name>
    <dbReference type="NCBI Taxonomy" id="8400"/>
    <lineage>
        <taxon>Eukaryota</taxon>
        <taxon>Metazoa</taxon>
        <taxon>Chordata</taxon>
        <taxon>Craniata</taxon>
        <taxon>Vertebrata</taxon>
        <taxon>Euteleostomi</taxon>
        <taxon>Amphibia</taxon>
        <taxon>Batrachia</taxon>
        <taxon>Anura</taxon>
        <taxon>Neobatrachia</taxon>
        <taxon>Ranoidea</taxon>
        <taxon>Ranidae</taxon>
        <taxon>Aquarana</taxon>
    </lineage>
</organism>